<evidence type="ECO:0000255" key="1"/>
<evidence type="ECO:0000305" key="2"/>
<reference key="1">
    <citation type="journal article" date="2000" name="Nature">
        <title>Complete genome sequence of Pseudomonas aeruginosa PAO1, an opportunistic pathogen.</title>
        <authorList>
            <person name="Stover C.K."/>
            <person name="Pham X.-Q.T."/>
            <person name="Erwin A.L."/>
            <person name="Mizoguchi S.D."/>
            <person name="Warrener P."/>
            <person name="Hickey M.J."/>
            <person name="Brinkman F.S.L."/>
            <person name="Hufnagle W.O."/>
            <person name="Kowalik D.J."/>
            <person name="Lagrou M."/>
            <person name="Garber R.L."/>
            <person name="Goltry L."/>
            <person name="Tolentino E."/>
            <person name="Westbrock-Wadman S."/>
            <person name="Yuan Y."/>
            <person name="Brody L.L."/>
            <person name="Coulter S.N."/>
            <person name="Folger K.R."/>
            <person name="Kas A."/>
            <person name="Larbig K."/>
            <person name="Lim R.M."/>
            <person name="Smith K.A."/>
            <person name="Spencer D.H."/>
            <person name="Wong G.K.-S."/>
            <person name="Wu Z."/>
            <person name="Paulsen I.T."/>
            <person name="Reizer J."/>
            <person name="Saier M.H. Jr."/>
            <person name="Hancock R.E.W."/>
            <person name="Lory S."/>
            <person name="Olson M.V."/>
        </authorList>
    </citation>
    <scope>NUCLEOTIDE SEQUENCE [LARGE SCALE GENOMIC DNA]</scope>
    <source>
        <strain>ATCC 15692 / DSM 22644 / CIP 104116 / JCM 14847 / LMG 12228 / 1C / PRS 101 / PAO1</strain>
    </source>
</reference>
<comment type="subcellular location">
    <subcellularLocation>
        <location evidence="2">Cell membrane</location>
        <topology evidence="2">Multi-pass membrane protein</topology>
    </subcellularLocation>
</comment>
<comment type="similarity">
    <text evidence="2">Belongs to the UPF0057 (PMP3) family.</text>
</comment>
<sequence length="52" mass="5717">MDLIRILIAILLPPLGVFLQVGFGGAFWLNILLTLLGYIPGIVHAVYIIAKR</sequence>
<dbReference type="EMBL" id="AE004091">
    <property type="protein sequence ID" value="AAG03956.1"/>
    <property type="molecule type" value="Genomic_DNA"/>
</dbReference>
<dbReference type="PIR" id="H83573">
    <property type="entry name" value="H83573"/>
</dbReference>
<dbReference type="RefSeq" id="NP_249258.1">
    <property type="nucleotide sequence ID" value="NC_002516.2"/>
</dbReference>
<dbReference type="RefSeq" id="WP_003084988.1">
    <property type="nucleotide sequence ID" value="NZ_QZGE01000010.1"/>
</dbReference>
<dbReference type="SMR" id="Q9I5W9"/>
<dbReference type="FunCoup" id="Q9I5W9">
    <property type="interactions" value="100"/>
</dbReference>
<dbReference type="STRING" id="208964.PA0567"/>
<dbReference type="PaxDb" id="208964-PA0567"/>
<dbReference type="DNASU" id="877760"/>
<dbReference type="GeneID" id="877760"/>
<dbReference type="KEGG" id="pae:PA0567"/>
<dbReference type="PATRIC" id="fig|208964.12.peg.599"/>
<dbReference type="PseudoCAP" id="PA0567"/>
<dbReference type="HOGENOM" id="CLU_107649_6_2_6"/>
<dbReference type="InParanoid" id="Q9I5W9"/>
<dbReference type="OrthoDB" id="9810121at2"/>
<dbReference type="PhylomeDB" id="Q9I5W9"/>
<dbReference type="BioCyc" id="PAER208964:G1FZ6-573-MONOMER"/>
<dbReference type="Proteomes" id="UP000002438">
    <property type="component" value="Chromosome"/>
</dbReference>
<dbReference type="GO" id="GO:0005886">
    <property type="term" value="C:plasma membrane"/>
    <property type="evidence" value="ECO:0007669"/>
    <property type="project" value="UniProtKB-SubCell"/>
</dbReference>
<dbReference type="InterPro" id="IPR000612">
    <property type="entry name" value="PMP3"/>
</dbReference>
<dbReference type="PANTHER" id="PTHR21659">
    <property type="entry name" value="HYDROPHOBIC PROTEIN RCI2 LOW TEMPERATURE AND SALT RESPONSIVE PROTEIN LTI6 -RELATED"/>
    <property type="match status" value="1"/>
</dbReference>
<dbReference type="PANTHER" id="PTHR21659:SF42">
    <property type="entry name" value="UPF0057 MEMBRANE PROTEIN ZK632.10-RELATED"/>
    <property type="match status" value="1"/>
</dbReference>
<dbReference type="Pfam" id="PF01679">
    <property type="entry name" value="Pmp3"/>
    <property type="match status" value="1"/>
</dbReference>
<dbReference type="PROSITE" id="PS01309">
    <property type="entry name" value="UPF0057"/>
    <property type="match status" value="1"/>
</dbReference>
<protein>
    <recommendedName>
        <fullName>UPF0057 membrane protein PA0567</fullName>
    </recommendedName>
</protein>
<name>Y567_PSEAE</name>
<keyword id="KW-1003">Cell membrane</keyword>
<keyword id="KW-0472">Membrane</keyword>
<keyword id="KW-1185">Reference proteome</keyword>
<keyword id="KW-0812">Transmembrane</keyword>
<keyword id="KW-1133">Transmembrane helix</keyword>
<proteinExistence type="inferred from homology"/>
<feature type="chain" id="PRO_0000194000" description="UPF0057 membrane protein PA0567">
    <location>
        <begin position="1"/>
        <end position="52"/>
    </location>
</feature>
<feature type="transmembrane region" description="Helical" evidence="1">
    <location>
        <begin position="6"/>
        <end position="26"/>
    </location>
</feature>
<feature type="transmembrane region" description="Helical" evidence="1">
    <location>
        <begin position="29"/>
        <end position="49"/>
    </location>
</feature>
<gene>
    <name type="ordered locus">PA0567</name>
</gene>
<accession>Q9I5W9</accession>
<organism>
    <name type="scientific">Pseudomonas aeruginosa (strain ATCC 15692 / DSM 22644 / CIP 104116 / JCM 14847 / LMG 12228 / 1C / PRS 101 / PAO1)</name>
    <dbReference type="NCBI Taxonomy" id="208964"/>
    <lineage>
        <taxon>Bacteria</taxon>
        <taxon>Pseudomonadati</taxon>
        <taxon>Pseudomonadota</taxon>
        <taxon>Gammaproteobacteria</taxon>
        <taxon>Pseudomonadales</taxon>
        <taxon>Pseudomonadaceae</taxon>
        <taxon>Pseudomonas</taxon>
    </lineage>
</organism>